<name>TGT_ACIB3</name>
<accession>B7GWL4</accession>
<gene>
    <name evidence="1" type="primary">tgt</name>
    <name type="ordered locus">ABBFA_000550</name>
</gene>
<proteinExistence type="inferred from homology"/>
<comment type="function">
    <text evidence="1">Catalyzes the base-exchange of a guanine (G) residue with the queuine precursor 7-aminomethyl-7-deazaguanine (PreQ1) at position 34 (anticodon wobble position) in tRNAs with GU(N) anticodons (tRNA-Asp, -Asn, -His and -Tyr). Catalysis occurs through a double-displacement mechanism. The nucleophile active site attacks the C1' of nucleotide 34 to detach the guanine base from the RNA, forming a covalent enzyme-RNA intermediate. The proton acceptor active site deprotonates the incoming PreQ1, allowing a nucleophilic attack on the C1' of the ribose to form the product. After dissociation, two additional enzymatic reactions on the tRNA convert PreQ1 to queuine (Q), resulting in the hypermodified nucleoside queuosine (7-(((4,5-cis-dihydroxy-2-cyclopenten-1-yl)amino)methyl)-7-deazaguanosine).</text>
</comment>
<comment type="catalytic activity">
    <reaction evidence="1">
        <text>7-aminomethyl-7-carbaguanine + guanosine(34) in tRNA = 7-aminomethyl-7-carbaguanosine(34) in tRNA + guanine</text>
        <dbReference type="Rhea" id="RHEA:24104"/>
        <dbReference type="Rhea" id="RHEA-COMP:10341"/>
        <dbReference type="Rhea" id="RHEA-COMP:10342"/>
        <dbReference type="ChEBI" id="CHEBI:16235"/>
        <dbReference type="ChEBI" id="CHEBI:58703"/>
        <dbReference type="ChEBI" id="CHEBI:74269"/>
        <dbReference type="ChEBI" id="CHEBI:82833"/>
        <dbReference type="EC" id="2.4.2.29"/>
    </reaction>
</comment>
<comment type="cofactor">
    <cofactor evidence="1">
        <name>Zn(2+)</name>
        <dbReference type="ChEBI" id="CHEBI:29105"/>
    </cofactor>
    <text evidence="1">Binds 1 zinc ion per subunit.</text>
</comment>
<comment type="pathway">
    <text evidence="1">tRNA modification; tRNA-queuosine biosynthesis.</text>
</comment>
<comment type="subunit">
    <text evidence="1">Homodimer. Within each dimer, one monomer is responsible for RNA recognition and catalysis, while the other monomer binds to the replacement base PreQ1.</text>
</comment>
<comment type="similarity">
    <text evidence="1">Belongs to the queuine tRNA-ribosyltransferase family.</text>
</comment>
<keyword id="KW-0328">Glycosyltransferase</keyword>
<keyword id="KW-0479">Metal-binding</keyword>
<keyword id="KW-0671">Queuosine biosynthesis</keyword>
<keyword id="KW-0808">Transferase</keyword>
<keyword id="KW-0819">tRNA processing</keyword>
<keyword id="KW-0862">Zinc</keyword>
<sequence>MKFEKLGQSGRARRGRLTLEHGVVETPVFMPVGTYGTVKGMLPRDIEDIQAQIILGNTFHLYLRPGLEVIKQHGGLHDFIKWNKPILTDSGGFQVFSLGAMRKIKEEGVTFRSPIDGSKVFLSPEISMEIQHVLNSDIVMIFDECTPYPATHEEAQKSLQLSLRWAKRCKAHHHDELKNKNALFGIIQGGMYEDLRDESLNGLLEIGFDGYAIGGLSVGEPKEEMIKVLDYLPNKMPHDKPRYLMGVGKPEDIVEAVRRGVDMFDCVMPTRNARNGHYFVTDGLVRIRNSKYRHDQGPLDPHCDCYTCKNFTRAYLFHLEKCGEMLASMLGTIHNLRYYQRLTEGMRDALDNGTFDEFVQDFYARRGLEVPPCPVDE</sequence>
<protein>
    <recommendedName>
        <fullName evidence="1">Queuine tRNA-ribosyltransferase</fullName>
        <ecNumber evidence="1">2.4.2.29</ecNumber>
    </recommendedName>
    <alternativeName>
        <fullName evidence="1">Guanine insertion enzyme</fullName>
    </alternativeName>
    <alternativeName>
        <fullName evidence="1">tRNA-guanine transglycosylase</fullName>
    </alternativeName>
</protein>
<dbReference type="EC" id="2.4.2.29" evidence="1"/>
<dbReference type="EMBL" id="CP001172">
    <property type="protein sequence ID" value="ACJ59040.1"/>
    <property type="molecule type" value="Genomic_DNA"/>
</dbReference>
<dbReference type="RefSeq" id="WP_000667229.1">
    <property type="nucleotide sequence ID" value="NZ_CP001172.1"/>
</dbReference>
<dbReference type="SMR" id="B7GWL4"/>
<dbReference type="HOGENOM" id="CLU_022060_0_1_6"/>
<dbReference type="UniPathway" id="UPA00392"/>
<dbReference type="Proteomes" id="UP000006924">
    <property type="component" value="Chromosome"/>
</dbReference>
<dbReference type="GO" id="GO:0005829">
    <property type="term" value="C:cytosol"/>
    <property type="evidence" value="ECO:0007669"/>
    <property type="project" value="TreeGrafter"/>
</dbReference>
<dbReference type="GO" id="GO:0046872">
    <property type="term" value="F:metal ion binding"/>
    <property type="evidence" value="ECO:0007669"/>
    <property type="project" value="UniProtKB-KW"/>
</dbReference>
<dbReference type="GO" id="GO:0008479">
    <property type="term" value="F:tRNA-guanosine(34) queuine transglycosylase activity"/>
    <property type="evidence" value="ECO:0007669"/>
    <property type="project" value="UniProtKB-UniRule"/>
</dbReference>
<dbReference type="GO" id="GO:0008616">
    <property type="term" value="P:queuosine biosynthetic process"/>
    <property type="evidence" value="ECO:0007669"/>
    <property type="project" value="UniProtKB-UniRule"/>
</dbReference>
<dbReference type="GO" id="GO:0002099">
    <property type="term" value="P:tRNA wobble guanine modification"/>
    <property type="evidence" value="ECO:0007669"/>
    <property type="project" value="TreeGrafter"/>
</dbReference>
<dbReference type="GO" id="GO:0101030">
    <property type="term" value="P:tRNA-guanine transglycosylation"/>
    <property type="evidence" value="ECO:0007669"/>
    <property type="project" value="InterPro"/>
</dbReference>
<dbReference type="FunFam" id="3.20.20.105:FF:000001">
    <property type="entry name" value="Queuine tRNA-ribosyltransferase"/>
    <property type="match status" value="1"/>
</dbReference>
<dbReference type="Gene3D" id="3.20.20.105">
    <property type="entry name" value="Queuine tRNA-ribosyltransferase-like"/>
    <property type="match status" value="1"/>
</dbReference>
<dbReference type="HAMAP" id="MF_00168">
    <property type="entry name" value="Q_tRNA_Tgt"/>
    <property type="match status" value="1"/>
</dbReference>
<dbReference type="InterPro" id="IPR050076">
    <property type="entry name" value="ArchSynthase1/Queuine_TRR"/>
</dbReference>
<dbReference type="InterPro" id="IPR004803">
    <property type="entry name" value="TGT"/>
</dbReference>
<dbReference type="InterPro" id="IPR036511">
    <property type="entry name" value="TGT-like_sf"/>
</dbReference>
<dbReference type="InterPro" id="IPR002616">
    <property type="entry name" value="tRNA_ribo_trans-like"/>
</dbReference>
<dbReference type="NCBIfam" id="TIGR00430">
    <property type="entry name" value="Q_tRNA_tgt"/>
    <property type="match status" value="1"/>
</dbReference>
<dbReference type="NCBIfam" id="TIGR00449">
    <property type="entry name" value="tgt_general"/>
    <property type="match status" value="1"/>
</dbReference>
<dbReference type="PANTHER" id="PTHR46499">
    <property type="entry name" value="QUEUINE TRNA-RIBOSYLTRANSFERASE"/>
    <property type="match status" value="1"/>
</dbReference>
<dbReference type="PANTHER" id="PTHR46499:SF1">
    <property type="entry name" value="QUEUINE TRNA-RIBOSYLTRANSFERASE"/>
    <property type="match status" value="1"/>
</dbReference>
<dbReference type="Pfam" id="PF01702">
    <property type="entry name" value="TGT"/>
    <property type="match status" value="1"/>
</dbReference>
<dbReference type="SUPFAM" id="SSF51713">
    <property type="entry name" value="tRNA-guanine transglycosylase"/>
    <property type="match status" value="1"/>
</dbReference>
<evidence type="ECO:0000255" key="1">
    <source>
        <dbReference type="HAMAP-Rule" id="MF_00168"/>
    </source>
</evidence>
<organism>
    <name type="scientific">Acinetobacter baumannii (strain AB307-0294)</name>
    <dbReference type="NCBI Taxonomy" id="557600"/>
    <lineage>
        <taxon>Bacteria</taxon>
        <taxon>Pseudomonadati</taxon>
        <taxon>Pseudomonadota</taxon>
        <taxon>Gammaproteobacteria</taxon>
        <taxon>Moraxellales</taxon>
        <taxon>Moraxellaceae</taxon>
        <taxon>Acinetobacter</taxon>
        <taxon>Acinetobacter calcoaceticus/baumannii complex</taxon>
    </lineage>
</organism>
<feature type="chain" id="PRO_1000197975" description="Queuine tRNA-ribosyltransferase">
    <location>
        <begin position="1"/>
        <end position="377"/>
    </location>
</feature>
<feature type="region of interest" description="RNA binding" evidence="1">
    <location>
        <begin position="246"/>
        <end position="252"/>
    </location>
</feature>
<feature type="region of interest" description="RNA binding; important for wobble base 34 recognition" evidence="1">
    <location>
        <begin position="270"/>
        <end position="274"/>
    </location>
</feature>
<feature type="active site" description="Proton acceptor" evidence="1">
    <location>
        <position position="89"/>
    </location>
</feature>
<feature type="active site" description="Nucleophile" evidence="1">
    <location>
        <position position="265"/>
    </location>
</feature>
<feature type="binding site" evidence="1">
    <location>
        <begin position="89"/>
        <end position="93"/>
    </location>
    <ligand>
        <name>substrate</name>
    </ligand>
</feature>
<feature type="binding site" evidence="1">
    <location>
        <position position="143"/>
    </location>
    <ligand>
        <name>substrate</name>
    </ligand>
</feature>
<feature type="binding site" evidence="1">
    <location>
        <position position="188"/>
    </location>
    <ligand>
        <name>substrate</name>
    </ligand>
</feature>
<feature type="binding site" evidence="1">
    <location>
        <position position="215"/>
    </location>
    <ligand>
        <name>substrate</name>
    </ligand>
</feature>
<feature type="binding site" evidence="1">
    <location>
        <position position="303"/>
    </location>
    <ligand>
        <name>Zn(2+)</name>
        <dbReference type="ChEBI" id="CHEBI:29105"/>
    </ligand>
</feature>
<feature type="binding site" evidence="1">
    <location>
        <position position="305"/>
    </location>
    <ligand>
        <name>Zn(2+)</name>
        <dbReference type="ChEBI" id="CHEBI:29105"/>
    </ligand>
</feature>
<feature type="binding site" evidence="1">
    <location>
        <position position="308"/>
    </location>
    <ligand>
        <name>Zn(2+)</name>
        <dbReference type="ChEBI" id="CHEBI:29105"/>
    </ligand>
</feature>
<feature type="binding site" evidence="1">
    <location>
        <position position="334"/>
    </location>
    <ligand>
        <name>Zn(2+)</name>
        <dbReference type="ChEBI" id="CHEBI:29105"/>
    </ligand>
</feature>
<reference key="1">
    <citation type="journal article" date="2008" name="J. Bacteriol.">
        <title>Comparative genome sequence analysis of multidrug-resistant Acinetobacter baumannii.</title>
        <authorList>
            <person name="Adams M.D."/>
            <person name="Goglin K."/>
            <person name="Molyneaux N."/>
            <person name="Hujer K.M."/>
            <person name="Lavender H."/>
            <person name="Jamison J.J."/>
            <person name="MacDonald I.J."/>
            <person name="Martin K.M."/>
            <person name="Russo T."/>
            <person name="Campagnari A.A."/>
            <person name="Hujer A.M."/>
            <person name="Bonomo R.A."/>
            <person name="Gill S.R."/>
        </authorList>
    </citation>
    <scope>NUCLEOTIDE SEQUENCE [LARGE SCALE GENOMIC DNA]</scope>
    <source>
        <strain>AB307-0294</strain>
    </source>
</reference>